<accession>A8IFI2</accession>
<feature type="chain" id="PRO_1000165151" description="Anhydro-N-acetylmuramic acid kinase">
    <location>
        <begin position="1"/>
        <end position="371"/>
    </location>
</feature>
<feature type="binding site" evidence="1">
    <location>
        <begin position="9"/>
        <end position="16"/>
    </location>
    <ligand>
        <name>ATP</name>
        <dbReference type="ChEBI" id="CHEBI:30616"/>
    </ligand>
</feature>
<comment type="function">
    <text evidence="1">Catalyzes the specific phosphorylation of 1,6-anhydro-N-acetylmuramic acid (anhMurNAc) with the simultaneous cleavage of the 1,6-anhydro ring, generating MurNAc-6-P. Is required for the utilization of anhMurNAc either imported from the medium or derived from its own cell wall murein, and thus plays a role in cell wall recycling.</text>
</comment>
<comment type="catalytic activity">
    <reaction evidence="1">
        <text>1,6-anhydro-N-acetyl-beta-muramate + ATP + H2O = N-acetyl-D-muramate 6-phosphate + ADP + H(+)</text>
        <dbReference type="Rhea" id="RHEA:24952"/>
        <dbReference type="ChEBI" id="CHEBI:15377"/>
        <dbReference type="ChEBI" id="CHEBI:15378"/>
        <dbReference type="ChEBI" id="CHEBI:30616"/>
        <dbReference type="ChEBI" id="CHEBI:58690"/>
        <dbReference type="ChEBI" id="CHEBI:58722"/>
        <dbReference type="ChEBI" id="CHEBI:456216"/>
        <dbReference type="EC" id="2.7.1.170"/>
    </reaction>
</comment>
<comment type="pathway">
    <text evidence="1">Amino-sugar metabolism; 1,6-anhydro-N-acetylmuramate degradation.</text>
</comment>
<comment type="pathway">
    <text evidence="1">Cell wall biogenesis; peptidoglycan recycling.</text>
</comment>
<comment type="similarity">
    <text evidence="1">Belongs to the anhydro-N-acetylmuramic acid kinase family.</text>
</comment>
<name>ANMK_AZOC5</name>
<evidence type="ECO:0000255" key="1">
    <source>
        <dbReference type="HAMAP-Rule" id="MF_01270"/>
    </source>
</evidence>
<sequence length="371" mass="38056">MRAIGLMSGTSMDGIDAALIETDGETVAWLGSALTIPYGAETRALLEGAMADARGVNARTDRPGRLVEAERRITTLHGAAVRALLDSLRLTPADIDVVGFHGQTVLHRPDAALTVQIGLGQALADDLRIPVVADLRAADVAAGGQGAPLVPVFHQALVRGLDLPQPVAVLNIGGVANVTVLEDGADPIACDTGPGNALLDDFMAARTGRPYDDDGASAARGQVDEAAVAEVLGHPFFAAPPPKSLDRNEFRAFVTERLHLAGASTDDGAATLTALSAASIAAVVPLLPKAPKSWIVAGGGARNSTLRAMLAERLGVPVVVAEQVGWSADALEAHAFGFLAVRSLKGLALTFPTTTGAPEPLTGGVLFQPTP</sequence>
<gene>
    <name evidence="1" type="primary">anmK</name>
    <name type="ordered locus">AZC_3618</name>
</gene>
<reference key="1">
    <citation type="submission" date="2007-04" db="EMBL/GenBank/DDBJ databases">
        <title>Complete genome sequence of the nitrogen-fixing bacterium Azorhizobium caulinodans ORS571.</title>
        <authorList>
            <person name="Lee K.B."/>
            <person name="Backer P.D."/>
            <person name="Aono T."/>
            <person name="Liu C.T."/>
            <person name="Suzuki S."/>
            <person name="Suzuki T."/>
            <person name="Kaneko T."/>
            <person name="Yamada M."/>
            <person name="Tabata S."/>
            <person name="Kupfer D.M."/>
            <person name="Najar F.Z."/>
            <person name="Wiley G.B."/>
            <person name="Roe B."/>
            <person name="Binnewies T."/>
            <person name="Ussery D."/>
            <person name="Vereecke D."/>
            <person name="Gevers D."/>
            <person name="Holsters M."/>
            <person name="Oyaizu H."/>
        </authorList>
    </citation>
    <scope>NUCLEOTIDE SEQUENCE [LARGE SCALE GENOMIC DNA]</scope>
    <source>
        <strain>ATCC 43989 / DSM 5975 / JCM 20966 / LMG 6465 / NBRC 14845 / NCIMB 13405 / ORS 571</strain>
    </source>
</reference>
<proteinExistence type="inferred from homology"/>
<protein>
    <recommendedName>
        <fullName evidence="1">Anhydro-N-acetylmuramic acid kinase</fullName>
        <ecNumber evidence="1">2.7.1.170</ecNumber>
    </recommendedName>
    <alternativeName>
        <fullName evidence="1">AnhMurNAc kinase</fullName>
    </alternativeName>
</protein>
<dbReference type="EC" id="2.7.1.170" evidence="1"/>
<dbReference type="EMBL" id="AP009384">
    <property type="protein sequence ID" value="BAF89616.1"/>
    <property type="molecule type" value="Genomic_DNA"/>
</dbReference>
<dbReference type="RefSeq" id="WP_012172141.1">
    <property type="nucleotide sequence ID" value="NC_009937.1"/>
</dbReference>
<dbReference type="SMR" id="A8IFI2"/>
<dbReference type="STRING" id="438753.AZC_3618"/>
<dbReference type="KEGG" id="azc:AZC_3618"/>
<dbReference type="eggNOG" id="COG2377">
    <property type="taxonomic scope" value="Bacteria"/>
</dbReference>
<dbReference type="HOGENOM" id="CLU_038782_3_0_5"/>
<dbReference type="UniPathway" id="UPA00343"/>
<dbReference type="UniPathway" id="UPA00544"/>
<dbReference type="Proteomes" id="UP000000270">
    <property type="component" value="Chromosome"/>
</dbReference>
<dbReference type="GO" id="GO:0005524">
    <property type="term" value="F:ATP binding"/>
    <property type="evidence" value="ECO:0007669"/>
    <property type="project" value="UniProtKB-UniRule"/>
</dbReference>
<dbReference type="GO" id="GO:0016301">
    <property type="term" value="F:kinase activity"/>
    <property type="evidence" value="ECO:0007669"/>
    <property type="project" value="UniProtKB-KW"/>
</dbReference>
<dbReference type="GO" id="GO:0016773">
    <property type="term" value="F:phosphotransferase activity, alcohol group as acceptor"/>
    <property type="evidence" value="ECO:0007669"/>
    <property type="project" value="UniProtKB-UniRule"/>
</dbReference>
<dbReference type="GO" id="GO:0097175">
    <property type="term" value="P:1,6-anhydro-N-acetyl-beta-muramic acid catabolic process"/>
    <property type="evidence" value="ECO:0007669"/>
    <property type="project" value="UniProtKB-UniRule"/>
</dbReference>
<dbReference type="GO" id="GO:0006040">
    <property type="term" value="P:amino sugar metabolic process"/>
    <property type="evidence" value="ECO:0007669"/>
    <property type="project" value="InterPro"/>
</dbReference>
<dbReference type="GO" id="GO:0009254">
    <property type="term" value="P:peptidoglycan turnover"/>
    <property type="evidence" value="ECO:0007669"/>
    <property type="project" value="UniProtKB-UniRule"/>
</dbReference>
<dbReference type="Gene3D" id="3.30.420.40">
    <property type="match status" value="2"/>
</dbReference>
<dbReference type="HAMAP" id="MF_01270">
    <property type="entry name" value="AnhMurNAc_kinase"/>
    <property type="match status" value="1"/>
</dbReference>
<dbReference type="InterPro" id="IPR005338">
    <property type="entry name" value="Anhydro_N_Ac-Mur_kinase"/>
</dbReference>
<dbReference type="InterPro" id="IPR043129">
    <property type="entry name" value="ATPase_NBD"/>
</dbReference>
<dbReference type="NCBIfam" id="NF007141">
    <property type="entry name" value="PRK09585.1-5"/>
    <property type="match status" value="1"/>
</dbReference>
<dbReference type="PANTHER" id="PTHR30605">
    <property type="entry name" value="ANHYDRO-N-ACETYLMURAMIC ACID KINASE"/>
    <property type="match status" value="1"/>
</dbReference>
<dbReference type="PANTHER" id="PTHR30605:SF0">
    <property type="entry name" value="ANHYDRO-N-ACETYLMURAMIC ACID KINASE"/>
    <property type="match status" value="1"/>
</dbReference>
<dbReference type="Pfam" id="PF03702">
    <property type="entry name" value="AnmK"/>
    <property type="match status" value="1"/>
</dbReference>
<dbReference type="SUPFAM" id="SSF53067">
    <property type="entry name" value="Actin-like ATPase domain"/>
    <property type="match status" value="1"/>
</dbReference>
<keyword id="KW-0067">ATP-binding</keyword>
<keyword id="KW-0119">Carbohydrate metabolism</keyword>
<keyword id="KW-0418">Kinase</keyword>
<keyword id="KW-0547">Nucleotide-binding</keyword>
<keyword id="KW-1185">Reference proteome</keyword>
<keyword id="KW-0808">Transferase</keyword>
<organism>
    <name type="scientific">Azorhizobium caulinodans (strain ATCC 43989 / DSM 5975 / JCM 20966 / LMG 6465 / NBRC 14845 / NCIMB 13405 / ORS 571)</name>
    <dbReference type="NCBI Taxonomy" id="438753"/>
    <lineage>
        <taxon>Bacteria</taxon>
        <taxon>Pseudomonadati</taxon>
        <taxon>Pseudomonadota</taxon>
        <taxon>Alphaproteobacteria</taxon>
        <taxon>Hyphomicrobiales</taxon>
        <taxon>Xanthobacteraceae</taxon>
        <taxon>Azorhizobium</taxon>
    </lineage>
</organism>